<feature type="chain" id="PRO_1000057372" description="Serine hydroxymethyltransferase">
    <location>
        <begin position="1"/>
        <end position="420"/>
    </location>
</feature>
<feature type="binding site" evidence="1">
    <location>
        <position position="123"/>
    </location>
    <ligand>
        <name>(6S)-5,6,7,8-tetrahydrofolate</name>
        <dbReference type="ChEBI" id="CHEBI:57453"/>
    </ligand>
</feature>
<feature type="binding site" evidence="1">
    <location>
        <begin position="127"/>
        <end position="129"/>
    </location>
    <ligand>
        <name>(6S)-5,6,7,8-tetrahydrofolate</name>
        <dbReference type="ChEBI" id="CHEBI:57453"/>
    </ligand>
</feature>
<feature type="binding site" evidence="1">
    <location>
        <begin position="357"/>
        <end position="359"/>
    </location>
    <ligand>
        <name>(6S)-5,6,7,8-tetrahydrofolate</name>
        <dbReference type="ChEBI" id="CHEBI:57453"/>
    </ligand>
</feature>
<feature type="site" description="Plays an important role in substrate specificity" evidence="1">
    <location>
        <position position="231"/>
    </location>
</feature>
<feature type="modified residue" description="N6-(pyridoxal phosphate)lysine" evidence="1">
    <location>
        <position position="232"/>
    </location>
</feature>
<organism>
    <name type="scientific">Streptococcus pyogenes serotype M4 (strain MGAS10750)</name>
    <dbReference type="NCBI Taxonomy" id="370554"/>
    <lineage>
        <taxon>Bacteria</taxon>
        <taxon>Bacillati</taxon>
        <taxon>Bacillota</taxon>
        <taxon>Bacilli</taxon>
        <taxon>Lactobacillales</taxon>
        <taxon>Streptococcaceae</taxon>
        <taxon>Streptococcus</taxon>
    </lineage>
</organism>
<gene>
    <name evidence="1" type="primary">glyA</name>
    <name type="ordered locus">MGAS10750_Spy1016</name>
</gene>
<evidence type="ECO:0000255" key="1">
    <source>
        <dbReference type="HAMAP-Rule" id="MF_00051"/>
    </source>
</evidence>
<accession>Q1J6L7</accession>
<proteinExistence type="inferred from homology"/>
<protein>
    <recommendedName>
        <fullName evidence="1">Serine hydroxymethyltransferase</fullName>
        <shortName evidence="1">SHMT</shortName>
        <shortName evidence="1">Serine methylase</shortName>
        <ecNumber evidence="1">2.1.2.1</ecNumber>
    </recommendedName>
</protein>
<sequence length="420" mass="45329">MTMIFDKGNVEDFDKELWDAIHAEEERQEHHIELIASENMVSKAVMAAQGSVLTNKYAESYPGNRYYGGTECVDIVETLAIERAKKLFGAAFANVQAHSGSQANAAAYMALIEAGDTVLGMDLAAGGHLTHGSPVNFSGKTYHFVGYSVDADTETLNYEAILEQAKAVQPKLIVAGASAYSRSIDFEKFRAIADHVGAYLMVDMAHIAGLVAAGVHPSPVPYAHIVTSTTHKTLRGPRGGLILTNDEALAKKINSAVFPGLQGGPLEHVIAAKAVAFKEALDPAFKDYAQAIIDNTAAMAAVFAQDDRFRLISGGTDNHVFLVDVTKVIANGKLAQNLLDEVNITLNKNAIPFETLSPFKTSGIRIGCAAITSRGMSVKESQTIARLIIKALVNHDQETILEEVRQEVRQLTDAFPLYKK</sequence>
<dbReference type="EC" id="2.1.2.1" evidence="1"/>
<dbReference type="EMBL" id="CP000262">
    <property type="protein sequence ID" value="ABF37966.1"/>
    <property type="molecule type" value="Genomic_DNA"/>
</dbReference>
<dbReference type="SMR" id="Q1J6L7"/>
<dbReference type="KEGG" id="spi:MGAS10750_Spy1016"/>
<dbReference type="HOGENOM" id="CLU_022477_2_1_9"/>
<dbReference type="UniPathway" id="UPA00193"/>
<dbReference type="UniPathway" id="UPA00288">
    <property type="reaction ID" value="UER01023"/>
</dbReference>
<dbReference type="Proteomes" id="UP000002434">
    <property type="component" value="Chromosome"/>
</dbReference>
<dbReference type="GO" id="GO:0005829">
    <property type="term" value="C:cytosol"/>
    <property type="evidence" value="ECO:0007669"/>
    <property type="project" value="TreeGrafter"/>
</dbReference>
<dbReference type="GO" id="GO:0004372">
    <property type="term" value="F:glycine hydroxymethyltransferase activity"/>
    <property type="evidence" value="ECO:0007669"/>
    <property type="project" value="UniProtKB-UniRule"/>
</dbReference>
<dbReference type="GO" id="GO:0030170">
    <property type="term" value="F:pyridoxal phosphate binding"/>
    <property type="evidence" value="ECO:0007669"/>
    <property type="project" value="UniProtKB-UniRule"/>
</dbReference>
<dbReference type="GO" id="GO:0019264">
    <property type="term" value="P:glycine biosynthetic process from serine"/>
    <property type="evidence" value="ECO:0007669"/>
    <property type="project" value="UniProtKB-UniRule"/>
</dbReference>
<dbReference type="GO" id="GO:0035999">
    <property type="term" value="P:tetrahydrofolate interconversion"/>
    <property type="evidence" value="ECO:0007669"/>
    <property type="project" value="UniProtKB-UniRule"/>
</dbReference>
<dbReference type="CDD" id="cd00378">
    <property type="entry name" value="SHMT"/>
    <property type="match status" value="1"/>
</dbReference>
<dbReference type="FunFam" id="3.40.640.10:FF:000001">
    <property type="entry name" value="Serine hydroxymethyltransferase"/>
    <property type="match status" value="1"/>
</dbReference>
<dbReference type="Gene3D" id="3.90.1150.10">
    <property type="entry name" value="Aspartate Aminotransferase, domain 1"/>
    <property type="match status" value="1"/>
</dbReference>
<dbReference type="Gene3D" id="3.40.640.10">
    <property type="entry name" value="Type I PLP-dependent aspartate aminotransferase-like (Major domain)"/>
    <property type="match status" value="1"/>
</dbReference>
<dbReference type="HAMAP" id="MF_00051">
    <property type="entry name" value="SHMT"/>
    <property type="match status" value="1"/>
</dbReference>
<dbReference type="InterPro" id="IPR015424">
    <property type="entry name" value="PyrdxlP-dep_Trfase"/>
</dbReference>
<dbReference type="InterPro" id="IPR015421">
    <property type="entry name" value="PyrdxlP-dep_Trfase_major"/>
</dbReference>
<dbReference type="InterPro" id="IPR015422">
    <property type="entry name" value="PyrdxlP-dep_Trfase_small"/>
</dbReference>
<dbReference type="InterPro" id="IPR001085">
    <property type="entry name" value="Ser_HO-MeTrfase"/>
</dbReference>
<dbReference type="InterPro" id="IPR049943">
    <property type="entry name" value="Ser_HO-MeTrfase-like"/>
</dbReference>
<dbReference type="InterPro" id="IPR019798">
    <property type="entry name" value="Ser_HO-MeTrfase_PLP_BS"/>
</dbReference>
<dbReference type="InterPro" id="IPR039429">
    <property type="entry name" value="SHMT-like_dom"/>
</dbReference>
<dbReference type="NCBIfam" id="NF000586">
    <property type="entry name" value="PRK00011.1"/>
    <property type="match status" value="1"/>
</dbReference>
<dbReference type="PANTHER" id="PTHR11680">
    <property type="entry name" value="SERINE HYDROXYMETHYLTRANSFERASE"/>
    <property type="match status" value="1"/>
</dbReference>
<dbReference type="PANTHER" id="PTHR11680:SF35">
    <property type="entry name" value="SERINE HYDROXYMETHYLTRANSFERASE 1"/>
    <property type="match status" value="1"/>
</dbReference>
<dbReference type="Pfam" id="PF00464">
    <property type="entry name" value="SHMT"/>
    <property type="match status" value="1"/>
</dbReference>
<dbReference type="PIRSF" id="PIRSF000412">
    <property type="entry name" value="SHMT"/>
    <property type="match status" value="1"/>
</dbReference>
<dbReference type="SUPFAM" id="SSF53383">
    <property type="entry name" value="PLP-dependent transferases"/>
    <property type="match status" value="1"/>
</dbReference>
<dbReference type="PROSITE" id="PS00096">
    <property type="entry name" value="SHMT"/>
    <property type="match status" value="1"/>
</dbReference>
<keyword id="KW-0028">Amino-acid biosynthesis</keyword>
<keyword id="KW-0963">Cytoplasm</keyword>
<keyword id="KW-0554">One-carbon metabolism</keyword>
<keyword id="KW-0663">Pyridoxal phosphate</keyword>
<keyword id="KW-0808">Transferase</keyword>
<name>GLYA_STRPF</name>
<comment type="function">
    <text evidence="1">Catalyzes the reversible interconversion of serine and glycine with tetrahydrofolate (THF) serving as the one-carbon carrier. This reaction serves as the major source of one-carbon groups required for the biosynthesis of purines, thymidylate, methionine, and other important biomolecules. Also exhibits THF-independent aldolase activity toward beta-hydroxyamino acids, producing glycine and aldehydes, via a retro-aldol mechanism.</text>
</comment>
<comment type="catalytic activity">
    <reaction evidence="1">
        <text>(6R)-5,10-methylene-5,6,7,8-tetrahydrofolate + glycine + H2O = (6S)-5,6,7,8-tetrahydrofolate + L-serine</text>
        <dbReference type="Rhea" id="RHEA:15481"/>
        <dbReference type="ChEBI" id="CHEBI:15377"/>
        <dbReference type="ChEBI" id="CHEBI:15636"/>
        <dbReference type="ChEBI" id="CHEBI:33384"/>
        <dbReference type="ChEBI" id="CHEBI:57305"/>
        <dbReference type="ChEBI" id="CHEBI:57453"/>
        <dbReference type="EC" id="2.1.2.1"/>
    </reaction>
</comment>
<comment type="cofactor">
    <cofactor evidence="1">
        <name>pyridoxal 5'-phosphate</name>
        <dbReference type="ChEBI" id="CHEBI:597326"/>
    </cofactor>
</comment>
<comment type="pathway">
    <text evidence="1">One-carbon metabolism; tetrahydrofolate interconversion.</text>
</comment>
<comment type="pathway">
    <text evidence="1">Amino-acid biosynthesis; glycine biosynthesis; glycine from L-serine: step 1/1.</text>
</comment>
<comment type="subunit">
    <text evidence="1">Homodimer.</text>
</comment>
<comment type="subcellular location">
    <subcellularLocation>
        <location evidence="1">Cytoplasm</location>
    </subcellularLocation>
</comment>
<comment type="similarity">
    <text evidence="1">Belongs to the SHMT family.</text>
</comment>
<reference key="1">
    <citation type="journal article" date="2006" name="Proc. Natl. Acad. Sci. U.S.A.">
        <title>Molecular genetic anatomy of inter- and intraserotype variation in the human bacterial pathogen group A Streptococcus.</title>
        <authorList>
            <person name="Beres S.B."/>
            <person name="Richter E.W."/>
            <person name="Nagiec M.J."/>
            <person name="Sumby P."/>
            <person name="Porcella S.F."/>
            <person name="DeLeo F.R."/>
            <person name="Musser J.M."/>
        </authorList>
    </citation>
    <scope>NUCLEOTIDE SEQUENCE [LARGE SCALE GENOMIC DNA]</scope>
    <source>
        <strain>MGAS10750</strain>
    </source>
</reference>